<name>HBB1_IGUIG</name>
<sequence length="146" mass="16111">VHWTAEEKQLITQVWGKIDVAQIGGETLACLLVVYPWTQRFFPDFGNLSNAAAICGNAKVKAHGKKVLTSFGDAVKNLDNIKDTFAKLSELHCDKLHVDPVNFRLLGNVMITRLAAHFGKDFTPACHAAFQKLTGAVAHALARRYH</sequence>
<keyword id="KW-0903">Direct protein sequencing</keyword>
<keyword id="KW-0349">Heme</keyword>
<keyword id="KW-0408">Iron</keyword>
<keyword id="KW-0479">Metal-binding</keyword>
<keyword id="KW-0561">Oxygen transport</keyword>
<keyword id="KW-0813">Transport</keyword>
<feature type="chain" id="PRO_0000052978" description="Hemoglobin subunit beta-1">
    <location>
        <begin position="1"/>
        <end position="146"/>
    </location>
</feature>
<feature type="domain" description="Globin" evidence="1">
    <location>
        <begin position="2"/>
        <end position="146"/>
    </location>
</feature>
<feature type="binding site" description="distal binding residue">
    <location>
        <position position="63"/>
    </location>
    <ligand>
        <name>heme b</name>
        <dbReference type="ChEBI" id="CHEBI:60344"/>
    </ligand>
    <ligandPart>
        <name>Fe</name>
        <dbReference type="ChEBI" id="CHEBI:18248"/>
    </ligandPart>
</feature>
<feature type="binding site" description="proximal binding residue">
    <location>
        <position position="92"/>
    </location>
    <ligand>
        <name>heme b</name>
        <dbReference type="ChEBI" id="CHEBI:60344"/>
    </ligand>
    <ligandPart>
        <name>Fe</name>
        <dbReference type="ChEBI" id="CHEBI:18248"/>
    </ligandPart>
</feature>
<proteinExistence type="evidence at protein level"/>
<gene>
    <name type="primary">HBB1</name>
</gene>
<protein>
    <recommendedName>
        <fullName>Hemoglobin subunit beta-1</fullName>
    </recommendedName>
    <alternativeName>
        <fullName>Beta-1-globin</fullName>
    </alternativeName>
    <alternativeName>
        <fullName>Hemoglobin beta-1 chain</fullName>
    </alternativeName>
</protein>
<dbReference type="PIR" id="S01665">
    <property type="entry name" value="HBIG1"/>
</dbReference>
<dbReference type="SMR" id="P18987"/>
<dbReference type="GO" id="GO:0072562">
    <property type="term" value="C:blood microparticle"/>
    <property type="evidence" value="ECO:0007669"/>
    <property type="project" value="TreeGrafter"/>
</dbReference>
<dbReference type="GO" id="GO:0031838">
    <property type="term" value="C:haptoglobin-hemoglobin complex"/>
    <property type="evidence" value="ECO:0007669"/>
    <property type="project" value="TreeGrafter"/>
</dbReference>
<dbReference type="GO" id="GO:0005833">
    <property type="term" value="C:hemoglobin complex"/>
    <property type="evidence" value="ECO:0007669"/>
    <property type="project" value="InterPro"/>
</dbReference>
<dbReference type="GO" id="GO:0031720">
    <property type="term" value="F:haptoglobin binding"/>
    <property type="evidence" value="ECO:0007669"/>
    <property type="project" value="TreeGrafter"/>
</dbReference>
<dbReference type="GO" id="GO:0020037">
    <property type="term" value="F:heme binding"/>
    <property type="evidence" value="ECO:0007669"/>
    <property type="project" value="InterPro"/>
</dbReference>
<dbReference type="GO" id="GO:0046872">
    <property type="term" value="F:metal ion binding"/>
    <property type="evidence" value="ECO:0007669"/>
    <property type="project" value="UniProtKB-KW"/>
</dbReference>
<dbReference type="GO" id="GO:0043177">
    <property type="term" value="F:organic acid binding"/>
    <property type="evidence" value="ECO:0007669"/>
    <property type="project" value="TreeGrafter"/>
</dbReference>
<dbReference type="GO" id="GO:0019825">
    <property type="term" value="F:oxygen binding"/>
    <property type="evidence" value="ECO:0007669"/>
    <property type="project" value="InterPro"/>
</dbReference>
<dbReference type="GO" id="GO:0005344">
    <property type="term" value="F:oxygen carrier activity"/>
    <property type="evidence" value="ECO:0007669"/>
    <property type="project" value="UniProtKB-KW"/>
</dbReference>
<dbReference type="GO" id="GO:0004601">
    <property type="term" value="F:peroxidase activity"/>
    <property type="evidence" value="ECO:0007669"/>
    <property type="project" value="TreeGrafter"/>
</dbReference>
<dbReference type="GO" id="GO:0042744">
    <property type="term" value="P:hydrogen peroxide catabolic process"/>
    <property type="evidence" value="ECO:0007669"/>
    <property type="project" value="TreeGrafter"/>
</dbReference>
<dbReference type="CDD" id="cd08925">
    <property type="entry name" value="Hb-beta-like"/>
    <property type="match status" value="1"/>
</dbReference>
<dbReference type="FunFam" id="1.10.490.10:FF:000001">
    <property type="entry name" value="Hemoglobin subunit beta"/>
    <property type="match status" value="1"/>
</dbReference>
<dbReference type="Gene3D" id="1.10.490.10">
    <property type="entry name" value="Globins"/>
    <property type="match status" value="1"/>
</dbReference>
<dbReference type="InterPro" id="IPR000971">
    <property type="entry name" value="Globin"/>
</dbReference>
<dbReference type="InterPro" id="IPR009050">
    <property type="entry name" value="Globin-like_sf"/>
</dbReference>
<dbReference type="InterPro" id="IPR012292">
    <property type="entry name" value="Globin/Proto"/>
</dbReference>
<dbReference type="InterPro" id="IPR002337">
    <property type="entry name" value="Hemoglobin_b"/>
</dbReference>
<dbReference type="InterPro" id="IPR050056">
    <property type="entry name" value="Hemoglobin_oxygen_transport"/>
</dbReference>
<dbReference type="PANTHER" id="PTHR11442">
    <property type="entry name" value="HEMOGLOBIN FAMILY MEMBER"/>
    <property type="match status" value="1"/>
</dbReference>
<dbReference type="PANTHER" id="PTHR11442:SF7">
    <property type="entry name" value="HEMOGLOBIN SUBUNIT EPSILON"/>
    <property type="match status" value="1"/>
</dbReference>
<dbReference type="Pfam" id="PF00042">
    <property type="entry name" value="Globin"/>
    <property type="match status" value="1"/>
</dbReference>
<dbReference type="PRINTS" id="PR00814">
    <property type="entry name" value="BETAHAEM"/>
</dbReference>
<dbReference type="SUPFAM" id="SSF46458">
    <property type="entry name" value="Globin-like"/>
    <property type="match status" value="1"/>
</dbReference>
<dbReference type="PROSITE" id="PS01033">
    <property type="entry name" value="GLOBIN"/>
    <property type="match status" value="1"/>
</dbReference>
<accession>P18987</accession>
<comment type="function">
    <text>Involved in oxygen transport from the lung to the various peripheral tissues.</text>
</comment>
<comment type="subunit">
    <text>Heterotetramer of two alpha chains and two beta chains.</text>
</comment>
<comment type="tissue specificity">
    <text>Red blood cells.</text>
</comment>
<comment type="similarity">
    <text evidence="1">Belongs to the globin family.</text>
</comment>
<organism>
    <name type="scientific">Iguana iguana</name>
    <name type="common">Common iguana</name>
    <dbReference type="NCBI Taxonomy" id="8517"/>
    <lineage>
        <taxon>Eukaryota</taxon>
        <taxon>Metazoa</taxon>
        <taxon>Chordata</taxon>
        <taxon>Craniata</taxon>
        <taxon>Vertebrata</taxon>
        <taxon>Euteleostomi</taxon>
        <taxon>Lepidosauria</taxon>
        <taxon>Squamata</taxon>
        <taxon>Bifurcata</taxon>
        <taxon>Unidentata</taxon>
        <taxon>Episquamata</taxon>
        <taxon>Toxicofera</taxon>
        <taxon>Iguania</taxon>
        <taxon>Iguanidae</taxon>
        <taxon>Iguaninae</taxon>
        <taxon>Iguana</taxon>
    </lineage>
</organism>
<reference key="1">
    <citation type="journal article" date="1988" name="Biol. Chem. Hoppe-Seyler">
        <title>Hemoglobins of reptiles. The primary structures of the alpha I- and beta I-chains of common iguana (Iguana iguana) hemoglobin.</title>
        <authorList>
            <person name="Ruecknagel K.P."/>
            <person name="Braunitzer G."/>
            <person name="Wiesner H."/>
        </authorList>
    </citation>
    <scope>PROTEIN SEQUENCE</scope>
</reference>
<evidence type="ECO:0000255" key="1">
    <source>
        <dbReference type="PROSITE-ProRule" id="PRU00238"/>
    </source>
</evidence>